<protein>
    <recommendedName>
        <fullName evidence="1">Ferredoxin--NADP reductase</fullName>
        <shortName evidence="1">FNR</shortName>
        <shortName evidence="1">Fd-NADP(+) reductase</shortName>
        <ecNumber evidence="1">1.18.1.2</ecNumber>
    </recommendedName>
</protein>
<keyword id="KW-0274">FAD</keyword>
<keyword id="KW-0285">Flavoprotein</keyword>
<keyword id="KW-0521">NADP</keyword>
<keyword id="KW-0560">Oxidoreductase</keyword>
<organism>
    <name type="scientific">Staphylococcus aureus (strain COL)</name>
    <dbReference type="NCBI Taxonomy" id="93062"/>
    <lineage>
        <taxon>Bacteria</taxon>
        <taxon>Bacillati</taxon>
        <taxon>Bacillota</taxon>
        <taxon>Bacilli</taxon>
        <taxon>Bacillales</taxon>
        <taxon>Staphylococcaceae</taxon>
        <taxon>Staphylococcus</taxon>
    </lineage>
</organism>
<evidence type="ECO:0000255" key="1">
    <source>
        <dbReference type="HAMAP-Rule" id="MF_01685"/>
    </source>
</evidence>
<reference key="1">
    <citation type="journal article" date="2005" name="J. Bacteriol.">
        <title>Insights on evolution of virulence and resistance from the complete genome analysis of an early methicillin-resistant Staphylococcus aureus strain and a biofilm-producing methicillin-resistant Staphylococcus epidermidis strain.</title>
        <authorList>
            <person name="Gill S.R."/>
            <person name="Fouts D.E."/>
            <person name="Archer G.L."/>
            <person name="Mongodin E.F."/>
            <person name="DeBoy R.T."/>
            <person name="Ravel J."/>
            <person name="Paulsen I.T."/>
            <person name="Kolonay J.F."/>
            <person name="Brinkac L.M."/>
            <person name="Beanan M.J."/>
            <person name="Dodson R.J."/>
            <person name="Daugherty S.C."/>
            <person name="Madupu R."/>
            <person name="Angiuoli S.V."/>
            <person name="Durkin A.S."/>
            <person name="Haft D.H."/>
            <person name="Vamathevan J.J."/>
            <person name="Khouri H."/>
            <person name="Utterback T.R."/>
            <person name="Lee C."/>
            <person name="Dimitrov G."/>
            <person name="Jiang L."/>
            <person name="Qin H."/>
            <person name="Weidman J."/>
            <person name="Tran K."/>
            <person name="Kang K.H."/>
            <person name="Hance I.R."/>
            <person name="Nelson K.E."/>
            <person name="Fraser C.M."/>
        </authorList>
    </citation>
    <scope>NUCLEOTIDE SEQUENCE [LARGE SCALE GENOMIC DNA]</scope>
    <source>
        <strain>COL</strain>
    </source>
</reference>
<name>FENR_STAAC</name>
<gene>
    <name type="ordered locus">SACOL2369</name>
</gene>
<sequence length="344" mass="38230">MKDVTIIGGGPSGLYASFYAGLRDMSVRLIDVQSELGGKMRIYPEKIIWDIGGIAPKPCHEILKDTIKQGLYFKPEVHLNERVVDIRKKAERHFEVETEAGEIYTSKAVIIAIGAGIINPKQLDVKGVERYQLTNLHYVVQSYRRFKDKDVLISGGGNTALDWAHDIAKIAKSVTVVYRKEDVSGHEAMKTLVTDLNVKLCPKTRIKYLVGNDDETHISEVVLEHVESGDRHTVKFDDVIISHGFDRCNTLLSETSSKLDMHDDCRVKGFGNTTTSIPGIYACGDIVYHDAKSHLIASAFSDGANAANLAKTYIQPDANAEGYVSSHHEVFKEANKTIVNKHLY</sequence>
<feature type="chain" id="PRO_0000364935" description="Ferredoxin--NADP reductase">
    <location>
        <begin position="1"/>
        <end position="344"/>
    </location>
</feature>
<feature type="binding site" evidence="1">
    <location>
        <position position="12"/>
    </location>
    <ligand>
        <name>FAD</name>
        <dbReference type="ChEBI" id="CHEBI:57692"/>
    </ligand>
</feature>
<feature type="binding site" evidence="1">
    <location>
        <position position="31"/>
    </location>
    <ligand>
        <name>FAD</name>
        <dbReference type="ChEBI" id="CHEBI:57692"/>
    </ligand>
</feature>
<feature type="binding site" evidence="1">
    <location>
        <position position="39"/>
    </location>
    <ligand>
        <name>FAD</name>
        <dbReference type="ChEBI" id="CHEBI:57692"/>
    </ligand>
</feature>
<feature type="binding site" evidence="1">
    <location>
        <position position="43"/>
    </location>
    <ligand>
        <name>FAD</name>
        <dbReference type="ChEBI" id="CHEBI:57692"/>
    </ligand>
</feature>
<feature type="binding site" evidence="1">
    <location>
        <position position="83"/>
    </location>
    <ligand>
        <name>FAD</name>
        <dbReference type="ChEBI" id="CHEBI:57692"/>
    </ligand>
</feature>
<feature type="binding site" evidence="1">
    <location>
        <position position="118"/>
    </location>
    <ligand>
        <name>FAD</name>
        <dbReference type="ChEBI" id="CHEBI:57692"/>
    </ligand>
</feature>
<feature type="binding site" evidence="1">
    <location>
        <position position="285"/>
    </location>
    <ligand>
        <name>FAD</name>
        <dbReference type="ChEBI" id="CHEBI:57692"/>
    </ligand>
</feature>
<feature type="binding site" evidence="1">
    <location>
        <position position="326"/>
    </location>
    <ligand>
        <name>FAD</name>
        <dbReference type="ChEBI" id="CHEBI:57692"/>
    </ligand>
</feature>
<comment type="catalytic activity">
    <reaction evidence="1">
        <text>2 reduced [2Fe-2S]-[ferredoxin] + NADP(+) + H(+) = 2 oxidized [2Fe-2S]-[ferredoxin] + NADPH</text>
        <dbReference type="Rhea" id="RHEA:20125"/>
        <dbReference type="Rhea" id="RHEA-COMP:10000"/>
        <dbReference type="Rhea" id="RHEA-COMP:10001"/>
        <dbReference type="ChEBI" id="CHEBI:15378"/>
        <dbReference type="ChEBI" id="CHEBI:33737"/>
        <dbReference type="ChEBI" id="CHEBI:33738"/>
        <dbReference type="ChEBI" id="CHEBI:57783"/>
        <dbReference type="ChEBI" id="CHEBI:58349"/>
        <dbReference type="EC" id="1.18.1.2"/>
    </reaction>
</comment>
<comment type="cofactor">
    <cofactor evidence="1">
        <name>FAD</name>
        <dbReference type="ChEBI" id="CHEBI:57692"/>
    </cofactor>
    <text evidence="1">Binds 1 FAD per subunit.</text>
</comment>
<comment type="subunit">
    <text evidence="1">Homodimer.</text>
</comment>
<comment type="similarity">
    <text evidence="1">Belongs to the ferredoxin--NADP reductase type 2 family.</text>
</comment>
<dbReference type="EC" id="1.18.1.2" evidence="1"/>
<dbReference type="EMBL" id="CP000046">
    <property type="protein sequence ID" value="AAW37196.1"/>
    <property type="molecule type" value="Genomic_DNA"/>
</dbReference>
<dbReference type="RefSeq" id="WP_000655971.1">
    <property type="nucleotide sequence ID" value="NZ_JBGOFO010000004.1"/>
</dbReference>
<dbReference type="SMR" id="Q5HDI3"/>
<dbReference type="KEGG" id="sac:SACOL2369"/>
<dbReference type="HOGENOM" id="CLU_031864_5_5_9"/>
<dbReference type="Proteomes" id="UP000000530">
    <property type="component" value="Chromosome"/>
</dbReference>
<dbReference type="GO" id="GO:0004324">
    <property type="term" value="F:ferredoxin-NADP+ reductase activity"/>
    <property type="evidence" value="ECO:0007669"/>
    <property type="project" value="UniProtKB-UniRule"/>
</dbReference>
<dbReference type="GO" id="GO:0050660">
    <property type="term" value="F:flavin adenine dinucleotide binding"/>
    <property type="evidence" value="ECO:0007669"/>
    <property type="project" value="UniProtKB-UniRule"/>
</dbReference>
<dbReference type="GO" id="GO:0050661">
    <property type="term" value="F:NADP binding"/>
    <property type="evidence" value="ECO:0007669"/>
    <property type="project" value="UniProtKB-UniRule"/>
</dbReference>
<dbReference type="Gene3D" id="3.50.50.60">
    <property type="entry name" value="FAD/NAD(P)-binding domain"/>
    <property type="match status" value="2"/>
</dbReference>
<dbReference type="HAMAP" id="MF_01685">
    <property type="entry name" value="FENR2"/>
    <property type="match status" value="1"/>
</dbReference>
<dbReference type="InterPro" id="IPR036188">
    <property type="entry name" value="FAD/NAD-bd_sf"/>
</dbReference>
<dbReference type="InterPro" id="IPR023753">
    <property type="entry name" value="FAD/NAD-binding_dom"/>
</dbReference>
<dbReference type="InterPro" id="IPR022890">
    <property type="entry name" value="Fd--NADP_Rdtase_type_2"/>
</dbReference>
<dbReference type="InterPro" id="IPR050097">
    <property type="entry name" value="Ferredoxin-NADP_redctase_2"/>
</dbReference>
<dbReference type="PANTHER" id="PTHR48105">
    <property type="entry name" value="THIOREDOXIN REDUCTASE 1-RELATED-RELATED"/>
    <property type="match status" value="1"/>
</dbReference>
<dbReference type="Pfam" id="PF07992">
    <property type="entry name" value="Pyr_redox_2"/>
    <property type="match status" value="1"/>
</dbReference>
<dbReference type="PRINTS" id="PR00368">
    <property type="entry name" value="FADPNR"/>
</dbReference>
<dbReference type="PRINTS" id="PR00469">
    <property type="entry name" value="PNDRDTASEII"/>
</dbReference>
<dbReference type="SUPFAM" id="SSF51905">
    <property type="entry name" value="FAD/NAD(P)-binding domain"/>
    <property type="match status" value="1"/>
</dbReference>
<accession>Q5HDI3</accession>
<proteinExistence type="inferred from homology"/>